<evidence type="ECO:0000250" key="1">
    <source>
        <dbReference type="UniProtKB" id="Q8C7K6"/>
    </source>
</evidence>
<evidence type="ECO:0000250" key="2">
    <source>
        <dbReference type="UniProtKB" id="Q9UHG3"/>
    </source>
</evidence>
<evidence type="ECO:0000255" key="3"/>
<evidence type="ECO:0000269" key="4">
    <source>
    </source>
</evidence>
<evidence type="ECO:0000269" key="5">
    <source>
    </source>
</evidence>
<evidence type="ECO:0000269" key="6">
    <source>
    </source>
</evidence>
<evidence type="ECO:0000269" key="7">
    <source>
    </source>
</evidence>
<evidence type="ECO:0000303" key="8">
    <source>
    </source>
</evidence>
<evidence type="ECO:0000303" key="9">
    <source ref="2"/>
</evidence>
<evidence type="ECO:0000305" key="10"/>
<protein>
    <recommendedName>
        <fullName>Prenylcysteine oxidase 1-like</fullName>
        <ecNumber>1.8.3.-</ecNumber>
    </recommendedName>
</protein>
<name>PCYXL_HUMAN</name>
<sequence length="494" mass="54646">MARAAPLLAALTALLAAAAAGGDAPPGKIAVVGAGIGGSAVAHFLQQHFGPRVQIDVYEKGTVGGRLATISVNKQHYESGAASFHSLSLHMQDFVKLLGLRHRREVVGRSAIFGGEHFMLEETDWYLLNLFRLWWHYGISFLRLQMWVEEVMEKFMRIYKYQAHGYAFSGVEELLYSLGESTFVNMTQHSVAESLLQVGVTQRFIDDVVSAVLRASYGQSAAMPAFAGAMSLAGAQGSLWSVEGGNKLVCSGLLKLTKANVIHATVTSVTLHSTEGKALYQVAYENEVGNSSDFYDIVVIATPLHLDNSSSNLTFAGFHPPIDDVQGSFQPTVVSLVHGYLNSSYFGFPDPKLFPFANILTTDFPSFFCTLDNICPVNISASFRRKQPQEAAVWRVQSPKPLFRTQLKTLFRSYYSVQTAEWQAHPLYGSRPTLPRFALHDQLFYLNALEWAASSVEVMAVAAKNVALLAYNRWYQDLDKIDQKDLMHKVKTEL</sequence>
<keyword id="KW-0025">Alternative splicing</keyword>
<keyword id="KW-0903">Direct protein sequencing</keyword>
<keyword id="KW-0274">FAD</keyword>
<keyword id="KW-0285">Flavoprotein</keyword>
<keyword id="KW-0325">Glycoprotein</keyword>
<keyword id="KW-0560">Oxidoreductase</keyword>
<keyword id="KW-1267">Proteomics identification</keyword>
<keyword id="KW-1185">Reference proteome</keyword>
<keyword id="KW-0964">Secreted</keyword>
<keyword id="KW-0732">Signal</keyword>
<dbReference type="EC" id="1.8.3.-"/>
<dbReference type="EMBL" id="AK075414">
    <property type="protein sequence ID" value="BAC11604.1"/>
    <property type="molecule type" value="mRNA"/>
</dbReference>
<dbReference type="EMBL" id="AF451985">
    <property type="protein sequence ID" value="AAP97684.1"/>
    <property type="status" value="ALT_SEQ"/>
    <property type="molecule type" value="mRNA"/>
</dbReference>
<dbReference type="EMBL" id="AC131025">
    <property type="status" value="NOT_ANNOTATED_CDS"/>
    <property type="molecule type" value="Genomic_DNA"/>
</dbReference>
<dbReference type="EMBL" id="BC000014">
    <property type="protein sequence ID" value="AAH00014.1"/>
    <property type="status" value="ALT_SEQ"/>
    <property type="molecule type" value="mRNA"/>
</dbReference>
<dbReference type="EMBL" id="BC004166">
    <property type="protein sequence ID" value="AAH04166.3"/>
    <property type="molecule type" value="mRNA"/>
</dbReference>
<dbReference type="EMBL" id="AL834220">
    <property type="protein sequence ID" value="CAD38901.2"/>
    <property type="molecule type" value="mRNA"/>
</dbReference>
<dbReference type="EMBL" id="AK090410">
    <property type="protein sequence ID" value="BAC03391.1"/>
    <property type="status" value="ALT_SEQ"/>
    <property type="molecule type" value="mRNA"/>
</dbReference>
<dbReference type="CCDS" id="CCDS4296.1">
    <molecule id="Q8NBM8-1"/>
</dbReference>
<dbReference type="RefSeq" id="NP_001287983.1">
    <property type="nucleotide sequence ID" value="NM_001301054.1"/>
</dbReference>
<dbReference type="RefSeq" id="NP_001287986.1">
    <property type="nucleotide sequence ID" value="NM_001301057.1"/>
</dbReference>
<dbReference type="RefSeq" id="NP_076933.3">
    <molecule id="Q8NBM8-1"/>
    <property type="nucleotide sequence ID" value="NM_024028.3"/>
</dbReference>
<dbReference type="SMR" id="Q8NBM8"/>
<dbReference type="BioGRID" id="122462">
    <property type="interactions" value="43"/>
</dbReference>
<dbReference type="FunCoup" id="Q8NBM8">
    <property type="interactions" value="483"/>
</dbReference>
<dbReference type="IntAct" id="Q8NBM8">
    <property type="interactions" value="26"/>
</dbReference>
<dbReference type="STRING" id="9606.ENSP00000274569"/>
<dbReference type="GlyCosmos" id="Q8NBM8">
    <property type="glycosylation" value="1 site, No reported glycans"/>
</dbReference>
<dbReference type="GlyGen" id="Q8NBM8">
    <property type="glycosylation" value="2 sites, 1 O-linked glycan (1 site)"/>
</dbReference>
<dbReference type="iPTMnet" id="Q8NBM8"/>
<dbReference type="PhosphoSitePlus" id="Q8NBM8"/>
<dbReference type="SwissPalm" id="Q8NBM8"/>
<dbReference type="BioMuta" id="PCYOX1L"/>
<dbReference type="DMDM" id="298286841"/>
<dbReference type="jPOST" id="Q8NBM8"/>
<dbReference type="MassIVE" id="Q8NBM8"/>
<dbReference type="PaxDb" id="9606-ENSP00000274569"/>
<dbReference type="PeptideAtlas" id="Q8NBM8"/>
<dbReference type="ProteomicsDB" id="72797">
    <molecule id="Q8NBM8-1"/>
</dbReference>
<dbReference type="Pumba" id="Q8NBM8"/>
<dbReference type="Antibodypedia" id="27814">
    <property type="antibodies" value="77 antibodies from 18 providers"/>
</dbReference>
<dbReference type="DNASU" id="78991"/>
<dbReference type="Ensembl" id="ENST00000274569.9">
    <molecule id="Q8NBM8-1"/>
    <property type="protein sequence ID" value="ENSP00000274569.4"/>
    <property type="gene ID" value="ENSG00000145882.11"/>
</dbReference>
<dbReference type="Ensembl" id="ENST00000505669.5">
    <molecule id="Q8NBM8-2"/>
    <property type="protein sequence ID" value="ENSP00000427166.1"/>
    <property type="gene ID" value="ENSG00000145882.11"/>
</dbReference>
<dbReference type="Ensembl" id="ENST00000511945.5">
    <molecule id="Q8NBM8-2"/>
    <property type="protein sequence ID" value="ENSP00000426091.1"/>
    <property type="gene ID" value="ENSG00000145882.11"/>
</dbReference>
<dbReference type="GeneID" id="78991"/>
<dbReference type="KEGG" id="hsa:78991"/>
<dbReference type="MANE-Select" id="ENST00000274569.9">
    <property type="protein sequence ID" value="ENSP00000274569.4"/>
    <property type="RefSeq nucleotide sequence ID" value="NM_024028.4"/>
    <property type="RefSeq protein sequence ID" value="NP_076933.3"/>
</dbReference>
<dbReference type="UCSC" id="uc003lqk.3">
    <molecule id="Q8NBM8-1"/>
    <property type="organism name" value="human"/>
</dbReference>
<dbReference type="AGR" id="HGNC:28477"/>
<dbReference type="CTD" id="78991"/>
<dbReference type="DisGeNET" id="78991"/>
<dbReference type="GeneCards" id="PCYOX1L"/>
<dbReference type="HGNC" id="HGNC:28477">
    <property type="gene designation" value="PCYOX1L"/>
</dbReference>
<dbReference type="HPA" id="ENSG00000145882">
    <property type="expression patterns" value="Low tissue specificity"/>
</dbReference>
<dbReference type="neXtProt" id="NX_Q8NBM8"/>
<dbReference type="OpenTargets" id="ENSG00000145882"/>
<dbReference type="PharmGKB" id="PA147357517"/>
<dbReference type="VEuPathDB" id="HostDB:ENSG00000145882"/>
<dbReference type="eggNOG" id="ENOG502QSHJ">
    <property type="taxonomic scope" value="Eukaryota"/>
</dbReference>
<dbReference type="GeneTree" id="ENSGT00390000011206"/>
<dbReference type="HOGENOM" id="CLU_021176_1_0_1"/>
<dbReference type="InParanoid" id="Q8NBM8"/>
<dbReference type="OMA" id="NMWAVEG"/>
<dbReference type="OrthoDB" id="437369at2759"/>
<dbReference type="PAN-GO" id="Q8NBM8">
    <property type="GO annotations" value="2 GO annotations based on evolutionary models"/>
</dbReference>
<dbReference type="PhylomeDB" id="Q8NBM8"/>
<dbReference type="TreeFam" id="TF329001"/>
<dbReference type="PathwayCommons" id="Q8NBM8"/>
<dbReference type="Reactome" id="R-HSA-114608">
    <property type="pathway name" value="Platelet degranulation"/>
</dbReference>
<dbReference type="SignaLink" id="Q8NBM8"/>
<dbReference type="BioGRID-ORCS" id="78991">
    <property type="hits" value="23 hits in 1151 CRISPR screens"/>
</dbReference>
<dbReference type="ChiTaRS" id="PCYOX1L">
    <property type="organism name" value="human"/>
</dbReference>
<dbReference type="GenomeRNAi" id="78991"/>
<dbReference type="Pharos" id="Q8NBM8">
    <property type="development level" value="Tdark"/>
</dbReference>
<dbReference type="PRO" id="PR:Q8NBM8"/>
<dbReference type="Proteomes" id="UP000005640">
    <property type="component" value="Chromosome 5"/>
</dbReference>
<dbReference type="RNAct" id="Q8NBM8">
    <property type="molecule type" value="protein"/>
</dbReference>
<dbReference type="Bgee" id="ENSG00000145882">
    <property type="expression patterns" value="Expressed in middle temporal gyrus and 190 other cell types or tissues"/>
</dbReference>
<dbReference type="ExpressionAtlas" id="Q8NBM8">
    <property type="expression patterns" value="baseline and differential"/>
</dbReference>
<dbReference type="GO" id="GO:0005576">
    <property type="term" value="C:extracellular region"/>
    <property type="evidence" value="ECO:0000304"/>
    <property type="project" value="Reactome"/>
</dbReference>
<dbReference type="GO" id="GO:0016020">
    <property type="term" value="C:membrane"/>
    <property type="evidence" value="ECO:0007005"/>
    <property type="project" value="UniProtKB"/>
</dbReference>
<dbReference type="GO" id="GO:0031093">
    <property type="term" value="C:platelet alpha granule lumen"/>
    <property type="evidence" value="ECO:0000304"/>
    <property type="project" value="Reactome"/>
</dbReference>
<dbReference type="GO" id="GO:0001735">
    <property type="term" value="F:prenylcysteine oxidase activity"/>
    <property type="evidence" value="ECO:0000318"/>
    <property type="project" value="GO_Central"/>
</dbReference>
<dbReference type="GO" id="GO:0070944">
    <property type="term" value="P:neutrophil-mediated killing of bacterium"/>
    <property type="evidence" value="ECO:0007669"/>
    <property type="project" value="Ensembl"/>
</dbReference>
<dbReference type="GO" id="GO:0030327">
    <property type="term" value="P:prenylated protein catabolic process"/>
    <property type="evidence" value="ECO:0000318"/>
    <property type="project" value="GO_Central"/>
</dbReference>
<dbReference type="GO" id="GO:0030328">
    <property type="term" value="P:prenylcysteine catabolic process"/>
    <property type="evidence" value="ECO:0007669"/>
    <property type="project" value="InterPro"/>
</dbReference>
<dbReference type="FunFam" id="3.50.50.60:FF:000081">
    <property type="entry name" value="prenylcysteine oxidase 1"/>
    <property type="match status" value="1"/>
</dbReference>
<dbReference type="FunFam" id="3.90.660.20:FF:000003">
    <property type="entry name" value="Prenylcysteine oxidase-like protein"/>
    <property type="match status" value="1"/>
</dbReference>
<dbReference type="Gene3D" id="3.50.50.60">
    <property type="entry name" value="FAD/NAD(P)-binding domain"/>
    <property type="match status" value="1"/>
</dbReference>
<dbReference type="Gene3D" id="3.90.660.20">
    <property type="entry name" value="Protoporphyrinogen oxidase, mitochondrial, domain 2"/>
    <property type="match status" value="1"/>
</dbReference>
<dbReference type="InterPro" id="IPR036188">
    <property type="entry name" value="FAD/NAD-bd_sf"/>
</dbReference>
<dbReference type="InterPro" id="IPR010795">
    <property type="entry name" value="Prenylcys_lyase"/>
</dbReference>
<dbReference type="InterPro" id="IPR017046">
    <property type="entry name" value="Prenylcysteine_Oxase1"/>
</dbReference>
<dbReference type="PANTHER" id="PTHR15944">
    <property type="entry name" value="FARNESYLCYSTEINE LYASE"/>
    <property type="match status" value="1"/>
</dbReference>
<dbReference type="PANTHER" id="PTHR15944:SF2">
    <property type="entry name" value="PRENYLCYSTEINE OXIDASE-LIKE"/>
    <property type="match status" value="1"/>
</dbReference>
<dbReference type="Pfam" id="PF13450">
    <property type="entry name" value="NAD_binding_8"/>
    <property type="match status" value="1"/>
</dbReference>
<dbReference type="Pfam" id="PF07156">
    <property type="entry name" value="Prenylcys_lyase"/>
    <property type="match status" value="1"/>
</dbReference>
<dbReference type="PIRSF" id="PIRSF036292">
    <property type="entry name" value="Prenylcysteine_oxidase"/>
    <property type="match status" value="1"/>
</dbReference>
<dbReference type="SUPFAM" id="SSF51905">
    <property type="entry name" value="FAD/NAD(P)-binding domain"/>
    <property type="match status" value="1"/>
</dbReference>
<comment type="function">
    <text evidence="1 10">Likely to have oxidoreductase activity (Probable). Required in the mevalonate pathway to regulate prenylation and enhances the bactericidal activity of neutrophils (By similarity).</text>
</comment>
<comment type="cofactor">
    <cofactor evidence="2">
        <name>FAD</name>
        <dbReference type="ChEBI" id="CHEBI:57692"/>
    </cofactor>
</comment>
<comment type="subcellular location">
    <subcellularLocation>
        <location evidence="10">Secreted</location>
    </subcellularLocation>
</comment>
<comment type="alternative products">
    <event type="alternative splicing"/>
    <isoform>
        <id>Q8NBM8-1</id>
        <name>1</name>
        <sequence type="displayed"/>
    </isoform>
    <isoform>
        <id>Q8NBM8-2</id>
        <name>2</name>
        <sequence type="described" ref="VSP_039271 VSP_039272"/>
    </isoform>
</comment>
<comment type="miscellaneous">
    <molecule>Isoform 2</molecule>
    <text evidence="10">May be produced at very low levels due to a premature stop codon in the mRNA, leading to nonsense-mediated mRNA decay.</text>
</comment>
<comment type="similarity">
    <text evidence="10">Belongs to the prenylcysteine oxidase family.</text>
</comment>
<comment type="sequence caution" evidence="10">
    <conflict type="erroneous translation">
        <sequence resource="EMBL-CDS" id="AAH00014"/>
    </conflict>
    <text>Wrong choice of CDS.</text>
</comment>
<comment type="sequence caution" evidence="10">
    <conflict type="erroneous translation">
        <sequence resource="EMBL-CDS" id="AAP97684"/>
    </conflict>
    <text>Wrong choice of CDS.</text>
</comment>
<comment type="sequence caution" evidence="10">
    <conflict type="miscellaneous discrepancy">
        <sequence resource="EMBL-CDS" id="BAC03391"/>
    </conflict>
    <text>Intron retention.</text>
</comment>
<gene>
    <name type="primary">PCYOX1L</name>
    <name type="ORF">PSEC0105</name>
</gene>
<reference key="1">
    <citation type="journal article" date="2005" name="DNA Res.">
        <title>Signal sequence and keyword trap in silico for selection of full-length human cDNAs encoding secretion or membrane proteins from oligo-capped cDNA libraries.</title>
        <authorList>
            <person name="Otsuki T."/>
            <person name="Ota T."/>
            <person name="Nishikawa T."/>
            <person name="Hayashi K."/>
            <person name="Suzuki Y."/>
            <person name="Yamamoto J."/>
            <person name="Wakamatsu A."/>
            <person name="Kimura K."/>
            <person name="Sakamoto K."/>
            <person name="Hatano N."/>
            <person name="Kawai Y."/>
            <person name="Ishii S."/>
            <person name="Saito K."/>
            <person name="Kojima S."/>
            <person name="Sugiyama T."/>
            <person name="Ono T."/>
            <person name="Okano K."/>
            <person name="Yoshikawa Y."/>
            <person name="Aotsuka S."/>
            <person name="Sasaki N."/>
            <person name="Hattori A."/>
            <person name="Okumura K."/>
            <person name="Nagai K."/>
            <person name="Sugano S."/>
            <person name="Isogai T."/>
        </authorList>
    </citation>
    <scope>NUCLEOTIDE SEQUENCE [LARGE SCALE MRNA] (ISOFORM 1)</scope>
    <scope>VARIANT PRO-5</scope>
    <source>
        <tissue>Teratocarcinoma</tissue>
    </source>
</reference>
<reference key="2">
    <citation type="submission" date="2001-11" db="EMBL/GenBank/DDBJ databases">
        <authorList>
            <person name="She X."/>
            <person name="Guo J.H."/>
            <person name="Yu L."/>
        </authorList>
    </citation>
    <scope>NUCLEOTIDE SEQUENCE [LARGE SCALE MRNA] (ISOFORM 2)</scope>
</reference>
<reference key="3">
    <citation type="journal article" date="2004" name="Nature">
        <title>The DNA sequence and comparative analysis of human chromosome 5.</title>
        <authorList>
            <person name="Schmutz J."/>
            <person name="Martin J."/>
            <person name="Terry A."/>
            <person name="Couronne O."/>
            <person name="Grimwood J."/>
            <person name="Lowry S."/>
            <person name="Gordon L.A."/>
            <person name="Scott D."/>
            <person name="Xie G."/>
            <person name="Huang W."/>
            <person name="Hellsten U."/>
            <person name="Tran-Gyamfi M."/>
            <person name="She X."/>
            <person name="Prabhakar S."/>
            <person name="Aerts A."/>
            <person name="Altherr M."/>
            <person name="Bajorek E."/>
            <person name="Black S."/>
            <person name="Branscomb E."/>
            <person name="Caoile C."/>
            <person name="Challacombe J.F."/>
            <person name="Chan Y.M."/>
            <person name="Denys M."/>
            <person name="Detter J.C."/>
            <person name="Escobar J."/>
            <person name="Flowers D."/>
            <person name="Fotopulos D."/>
            <person name="Glavina T."/>
            <person name="Gomez M."/>
            <person name="Gonzales E."/>
            <person name="Goodstein D."/>
            <person name="Grigoriev I."/>
            <person name="Groza M."/>
            <person name="Hammon N."/>
            <person name="Hawkins T."/>
            <person name="Haydu L."/>
            <person name="Israni S."/>
            <person name="Jett J."/>
            <person name="Kadner K."/>
            <person name="Kimball H."/>
            <person name="Kobayashi A."/>
            <person name="Lopez F."/>
            <person name="Lou Y."/>
            <person name="Martinez D."/>
            <person name="Medina C."/>
            <person name="Morgan J."/>
            <person name="Nandkeshwar R."/>
            <person name="Noonan J.P."/>
            <person name="Pitluck S."/>
            <person name="Pollard M."/>
            <person name="Predki P."/>
            <person name="Priest J."/>
            <person name="Ramirez L."/>
            <person name="Retterer J."/>
            <person name="Rodriguez A."/>
            <person name="Rogers S."/>
            <person name="Salamov A."/>
            <person name="Salazar A."/>
            <person name="Thayer N."/>
            <person name="Tice H."/>
            <person name="Tsai M."/>
            <person name="Ustaszewska A."/>
            <person name="Vo N."/>
            <person name="Wheeler J."/>
            <person name="Wu K."/>
            <person name="Yang J."/>
            <person name="Dickson M."/>
            <person name="Cheng J.-F."/>
            <person name="Eichler E.E."/>
            <person name="Olsen A."/>
            <person name="Pennacchio L.A."/>
            <person name="Rokhsar D.S."/>
            <person name="Richardson P."/>
            <person name="Lucas S.M."/>
            <person name="Myers R.M."/>
            <person name="Rubin E.M."/>
        </authorList>
    </citation>
    <scope>NUCLEOTIDE SEQUENCE [LARGE SCALE GENOMIC DNA]</scope>
</reference>
<reference key="4">
    <citation type="journal article" date="2004" name="Genome Res.">
        <title>The status, quality, and expansion of the NIH full-length cDNA project: the Mammalian Gene Collection (MGC).</title>
        <authorList>
            <consortium name="The MGC Project Team"/>
        </authorList>
    </citation>
    <scope>NUCLEOTIDE SEQUENCE [LARGE SCALE MRNA] (ISOFORM 2)</scope>
    <scope>NUCLEOTIDE SEQUENCE [LARGE SCALE MRNA] OF 173-494 (ISOFORM 1)</scope>
    <scope>VARIANT ASP-390</scope>
    <source>
        <tissue>Kidney</tissue>
        <tissue>Lung</tissue>
    </source>
</reference>
<reference key="5">
    <citation type="journal article" date="2004" name="Protein Sci.">
        <title>Signal peptide prediction based on analysis of experimentally verified cleavage sites.</title>
        <authorList>
            <person name="Zhang Z."/>
            <person name="Henzel W.J."/>
        </authorList>
    </citation>
    <scope>PROTEIN SEQUENCE OF 23-37</scope>
</reference>
<reference key="6">
    <citation type="journal article" date="2007" name="BMC Genomics">
        <title>The full-ORF clone resource of the German cDNA consortium.</title>
        <authorList>
            <person name="Bechtel S."/>
            <person name="Rosenfelder H."/>
            <person name="Duda A."/>
            <person name="Schmidt C.P."/>
            <person name="Ernst U."/>
            <person name="Wellenreuther R."/>
            <person name="Mehrle A."/>
            <person name="Schuster C."/>
            <person name="Bahr A."/>
            <person name="Bloecker H."/>
            <person name="Heubner D."/>
            <person name="Hoerlein A."/>
            <person name="Michel G."/>
            <person name="Wedler H."/>
            <person name="Koehrer K."/>
            <person name="Ottenwaelder B."/>
            <person name="Poustka A."/>
            <person name="Wiemann S."/>
            <person name="Schupp I."/>
        </authorList>
    </citation>
    <scope>NUCLEOTIDE SEQUENCE [LARGE SCALE MRNA] OF 31-494</scope>
    <scope>VARIANT ASP-390</scope>
    <source>
        <tissue>Lymph node</tissue>
    </source>
</reference>
<reference key="7">
    <citation type="submission" date="2002-07" db="EMBL/GenBank/DDBJ databases">
        <title>The nucleotide sequence of a long cDNA clone isolated from human spleen.</title>
        <authorList>
            <person name="Jikuya H."/>
            <person name="Takano J."/>
            <person name="Nomura N."/>
            <person name="Kikuno R."/>
            <person name="Nagase T."/>
            <person name="Ohara O."/>
        </authorList>
    </citation>
    <scope>NUCLEOTIDE SEQUENCE [LARGE SCALE MRNA] OF 157-494 (ISOFORM 1)</scope>
    <source>
        <tissue>Spleen</tissue>
    </source>
</reference>
<reference key="8">
    <citation type="journal article" date="2011" name="BMC Syst. Biol.">
        <title>Initial characterization of the human central proteome.</title>
        <authorList>
            <person name="Burkard T.R."/>
            <person name="Planyavsky M."/>
            <person name="Kaupe I."/>
            <person name="Breitwieser F.P."/>
            <person name="Buerckstuemmer T."/>
            <person name="Bennett K.L."/>
            <person name="Superti-Furga G."/>
            <person name="Colinge J."/>
        </authorList>
    </citation>
    <scope>IDENTIFICATION BY MASS SPECTROMETRY [LARGE SCALE ANALYSIS]</scope>
</reference>
<reference key="9">
    <citation type="journal article" date="2015" name="Proteomics">
        <title>N-terminome analysis of the human mitochondrial proteome.</title>
        <authorList>
            <person name="Vaca Jacome A.S."/>
            <person name="Rabilloud T."/>
            <person name="Schaeffer-Reiss C."/>
            <person name="Rompais M."/>
            <person name="Ayoub D."/>
            <person name="Lane L."/>
            <person name="Bairoch A."/>
            <person name="Van Dorsselaer A."/>
            <person name="Carapito C."/>
        </authorList>
    </citation>
    <scope>IDENTIFICATION BY MASS SPECTROMETRY [LARGE SCALE ANALYSIS]</scope>
</reference>
<organism>
    <name type="scientific">Homo sapiens</name>
    <name type="common">Human</name>
    <dbReference type="NCBI Taxonomy" id="9606"/>
    <lineage>
        <taxon>Eukaryota</taxon>
        <taxon>Metazoa</taxon>
        <taxon>Chordata</taxon>
        <taxon>Craniata</taxon>
        <taxon>Vertebrata</taxon>
        <taxon>Euteleostomi</taxon>
        <taxon>Mammalia</taxon>
        <taxon>Eutheria</taxon>
        <taxon>Euarchontoglires</taxon>
        <taxon>Primates</taxon>
        <taxon>Haplorrhini</taxon>
        <taxon>Catarrhini</taxon>
        <taxon>Hominidae</taxon>
        <taxon>Homo</taxon>
    </lineage>
</organism>
<accession>Q8NBM8</accession>
<accession>Q7Z4S2</accession>
<accession>Q8NCY5</accession>
<accession>Q8NF69</accession>
<accession>Q9BTE8</accession>
<accession>Q9BWS3</accession>
<feature type="signal peptide" evidence="4">
    <location>
        <begin position="1"/>
        <end position="22"/>
    </location>
</feature>
<feature type="chain" id="PRO_0000280286" description="Prenylcysteine oxidase 1-like">
    <location>
        <begin position="23"/>
        <end position="494"/>
    </location>
</feature>
<feature type="glycosylation site" description="N-linked (GlcNAc...) asparagine" evidence="3">
    <location>
        <position position="342"/>
    </location>
</feature>
<feature type="splice variant" id="VSP_039271" description="In isoform 2." evidence="8 9">
    <original>AVVGAGIGGSAVAHFLQQHFGPRVQIDVYEKGTVGGRLATISVNKQHYESGAA</original>
    <variation>GAGRTRGGWGWDWGLCCGPFSPAALWTSGADRRVREGNRGWPLGHHLSQQAAL</variation>
    <location>
        <begin position="30"/>
        <end position="82"/>
    </location>
</feature>
<feature type="splice variant" id="VSP_039272" description="In isoform 2." evidence="8 9">
    <location>
        <begin position="83"/>
        <end position="494"/>
    </location>
</feature>
<feature type="sequence variant" id="VAR_031110" description="In dbSNP:rs2291814." evidence="6">
    <original>A</original>
    <variation>P</variation>
    <location>
        <position position="5"/>
    </location>
</feature>
<feature type="sequence variant" id="VAR_050472" description="In dbSNP:rs35552800.">
    <original>A</original>
    <variation>T</variation>
    <location>
        <position position="316"/>
    </location>
</feature>
<feature type="sequence variant" id="VAR_031111" description="In dbSNP:rs4705336." evidence="5 7">
    <original>E</original>
    <variation>D</variation>
    <location>
        <position position="390"/>
    </location>
</feature>
<feature type="sequence conflict" description="In Ref. 7; BAC03391." evidence="10" ref="7">
    <original>H</original>
    <variation>P</variation>
    <location>
        <position position="338"/>
    </location>
</feature>
<feature type="sequence conflict" description="In Ref. 7; BAC03391." evidence="10" ref="7">
    <original>R</original>
    <variation>P</variation>
    <location>
        <position position="431"/>
    </location>
</feature>
<proteinExistence type="evidence at protein level"/>